<gene>
    <name type="primary">pab1</name>
    <name type="ORF">SPAC227.07c</name>
</gene>
<feature type="chain" id="PRO_0000071441" description="Protein phosphatase PP2A regulatory subunit B">
    <location>
        <begin position="1"/>
        <end position="463"/>
    </location>
</feature>
<feature type="repeat" description="WD 1">
    <location>
        <begin position="27"/>
        <end position="66"/>
    </location>
</feature>
<feature type="repeat" description="WD 2">
    <location>
        <begin position="87"/>
        <end position="128"/>
    </location>
</feature>
<feature type="repeat" description="WD 3">
    <location>
        <begin position="174"/>
        <end position="212"/>
    </location>
</feature>
<feature type="repeat" description="WD 4">
    <location>
        <begin position="223"/>
        <end position="263"/>
    </location>
</feature>
<feature type="repeat" description="WD 5">
    <location>
        <begin position="282"/>
        <end position="320"/>
    </location>
</feature>
<feature type="repeat" description="WD 6">
    <location>
        <begin position="337"/>
        <end position="378"/>
    </location>
</feature>
<feature type="modified residue" description="Phosphoserine" evidence="1">
    <location>
        <position position="134"/>
    </location>
</feature>
<feature type="sequence conflict" description="In Ref. 1; BAA09945." evidence="3" ref="1">
    <original>K</original>
    <variation>R</variation>
    <location>
        <position position="126"/>
    </location>
</feature>
<feature type="sequence conflict" description="In Ref. 1; BAA09945." evidence="3" ref="1">
    <original>L</original>
    <variation>V</variation>
    <location>
        <position position="145"/>
    </location>
</feature>
<protein>
    <recommendedName>
        <fullName>Protein phosphatase PP2A regulatory subunit B</fullName>
    </recommendedName>
    <alternativeName>
        <fullName>Protein phosphatase 2A 55 kDa regulatory subunit</fullName>
        <shortName>PR55</shortName>
    </alternativeName>
</protein>
<proteinExistence type="evidence at protein level"/>
<evidence type="ECO:0000269" key="1">
    <source>
    </source>
</evidence>
<evidence type="ECO:0000269" key="2">
    <source>
    </source>
</evidence>
<evidence type="ECO:0000305" key="3"/>
<reference key="1">
    <citation type="journal article" date="1996" name="Genes Cells">
        <title>The regulatory subunits of fission yeast protein phosphatase 2A (PP2A) affect cell morphogenesis, cell wall synthesis and cytokinesis.</title>
        <authorList>
            <person name="Kinoshita K."/>
            <person name="Nemoto T."/>
            <person name="Nabeshima K."/>
            <person name="Kondoh H."/>
            <person name="Niwa H."/>
            <person name="Yanagida M."/>
        </authorList>
    </citation>
    <scope>NUCLEOTIDE SEQUENCE [GENOMIC DNA]</scope>
    <scope>FUNCTION</scope>
    <scope>SUBUNIT</scope>
</reference>
<reference key="2">
    <citation type="journal article" date="2002" name="Nature">
        <title>The genome sequence of Schizosaccharomyces pombe.</title>
        <authorList>
            <person name="Wood V."/>
            <person name="Gwilliam R."/>
            <person name="Rajandream M.A."/>
            <person name="Lyne M.H."/>
            <person name="Lyne R."/>
            <person name="Stewart A."/>
            <person name="Sgouros J.G."/>
            <person name="Peat N."/>
            <person name="Hayles J."/>
            <person name="Baker S.G."/>
            <person name="Basham D."/>
            <person name="Bowman S."/>
            <person name="Brooks K."/>
            <person name="Brown D."/>
            <person name="Brown S."/>
            <person name="Chillingworth T."/>
            <person name="Churcher C.M."/>
            <person name="Collins M."/>
            <person name="Connor R."/>
            <person name="Cronin A."/>
            <person name="Davis P."/>
            <person name="Feltwell T."/>
            <person name="Fraser A."/>
            <person name="Gentles S."/>
            <person name="Goble A."/>
            <person name="Hamlin N."/>
            <person name="Harris D.E."/>
            <person name="Hidalgo J."/>
            <person name="Hodgson G."/>
            <person name="Holroyd S."/>
            <person name="Hornsby T."/>
            <person name="Howarth S."/>
            <person name="Huckle E.J."/>
            <person name="Hunt S."/>
            <person name="Jagels K."/>
            <person name="James K.D."/>
            <person name="Jones L."/>
            <person name="Jones M."/>
            <person name="Leather S."/>
            <person name="McDonald S."/>
            <person name="McLean J."/>
            <person name="Mooney P."/>
            <person name="Moule S."/>
            <person name="Mungall K.L."/>
            <person name="Murphy L.D."/>
            <person name="Niblett D."/>
            <person name="Odell C."/>
            <person name="Oliver K."/>
            <person name="O'Neil S."/>
            <person name="Pearson D."/>
            <person name="Quail M.A."/>
            <person name="Rabbinowitsch E."/>
            <person name="Rutherford K.M."/>
            <person name="Rutter S."/>
            <person name="Saunders D."/>
            <person name="Seeger K."/>
            <person name="Sharp S."/>
            <person name="Skelton J."/>
            <person name="Simmonds M.N."/>
            <person name="Squares R."/>
            <person name="Squares S."/>
            <person name="Stevens K."/>
            <person name="Taylor K."/>
            <person name="Taylor R.G."/>
            <person name="Tivey A."/>
            <person name="Walsh S.V."/>
            <person name="Warren T."/>
            <person name="Whitehead S."/>
            <person name="Woodward J.R."/>
            <person name="Volckaert G."/>
            <person name="Aert R."/>
            <person name="Robben J."/>
            <person name="Grymonprez B."/>
            <person name="Weltjens I."/>
            <person name="Vanstreels E."/>
            <person name="Rieger M."/>
            <person name="Schaefer M."/>
            <person name="Mueller-Auer S."/>
            <person name="Gabel C."/>
            <person name="Fuchs M."/>
            <person name="Duesterhoeft A."/>
            <person name="Fritzc C."/>
            <person name="Holzer E."/>
            <person name="Moestl D."/>
            <person name="Hilbert H."/>
            <person name="Borzym K."/>
            <person name="Langer I."/>
            <person name="Beck A."/>
            <person name="Lehrach H."/>
            <person name="Reinhardt R."/>
            <person name="Pohl T.M."/>
            <person name="Eger P."/>
            <person name="Zimmermann W."/>
            <person name="Wedler H."/>
            <person name="Wambutt R."/>
            <person name="Purnelle B."/>
            <person name="Goffeau A."/>
            <person name="Cadieu E."/>
            <person name="Dreano S."/>
            <person name="Gloux S."/>
            <person name="Lelaure V."/>
            <person name="Mottier S."/>
            <person name="Galibert F."/>
            <person name="Aves S.J."/>
            <person name="Xiang Z."/>
            <person name="Hunt C."/>
            <person name="Moore K."/>
            <person name="Hurst S.M."/>
            <person name="Lucas M."/>
            <person name="Rochet M."/>
            <person name="Gaillardin C."/>
            <person name="Tallada V.A."/>
            <person name="Garzon A."/>
            <person name="Thode G."/>
            <person name="Daga R.R."/>
            <person name="Cruzado L."/>
            <person name="Jimenez J."/>
            <person name="Sanchez M."/>
            <person name="del Rey F."/>
            <person name="Benito J."/>
            <person name="Dominguez A."/>
            <person name="Revuelta J.L."/>
            <person name="Moreno S."/>
            <person name="Armstrong J."/>
            <person name="Forsburg S.L."/>
            <person name="Cerutti L."/>
            <person name="Lowe T."/>
            <person name="McCombie W.R."/>
            <person name="Paulsen I."/>
            <person name="Potashkin J."/>
            <person name="Shpakovski G.V."/>
            <person name="Ussery D."/>
            <person name="Barrell B.G."/>
            <person name="Nurse P."/>
        </authorList>
    </citation>
    <scope>NUCLEOTIDE SEQUENCE [LARGE SCALE GENOMIC DNA]</scope>
    <source>
        <strain>972 / ATCC 24843</strain>
    </source>
</reference>
<reference key="3">
    <citation type="journal article" date="2008" name="J. Proteome Res.">
        <title>Phosphoproteome analysis of fission yeast.</title>
        <authorList>
            <person name="Wilson-Grady J.T."/>
            <person name="Villen J."/>
            <person name="Gygi S.P."/>
        </authorList>
    </citation>
    <scope>PHOSPHORYLATION [LARGE SCALE ANALYSIS] AT SER-134</scope>
    <scope>IDENTIFICATION BY MASS SPECTROMETRY</scope>
</reference>
<keyword id="KW-0597">Phosphoprotein</keyword>
<keyword id="KW-1185">Reference proteome</keyword>
<keyword id="KW-0677">Repeat</keyword>
<keyword id="KW-0853">WD repeat</keyword>
<organism>
    <name type="scientific">Schizosaccharomyces pombe (strain 972 / ATCC 24843)</name>
    <name type="common">Fission yeast</name>
    <dbReference type="NCBI Taxonomy" id="284812"/>
    <lineage>
        <taxon>Eukaryota</taxon>
        <taxon>Fungi</taxon>
        <taxon>Dikarya</taxon>
        <taxon>Ascomycota</taxon>
        <taxon>Taphrinomycotina</taxon>
        <taxon>Schizosaccharomycetes</taxon>
        <taxon>Schizosaccharomycetales</taxon>
        <taxon>Schizosaccharomycetaceae</taxon>
        <taxon>Schizosaccharomyces</taxon>
    </lineage>
</organism>
<dbReference type="EMBL" id="D63915">
    <property type="protein sequence ID" value="BAA09945.1"/>
    <property type="molecule type" value="Genomic_DNA"/>
</dbReference>
<dbReference type="EMBL" id="CU329670">
    <property type="protein sequence ID" value="CAB61456.1"/>
    <property type="molecule type" value="Genomic_DNA"/>
</dbReference>
<dbReference type="PIR" id="T50163">
    <property type="entry name" value="T50163"/>
</dbReference>
<dbReference type="RefSeq" id="NP_592961.1">
    <property type="nucleotide sequence ID" value="NM_001018361.2"/>
</dbReference>
<dbReference type="SMR" id="Q12702"/>
<dbReference type="BioGRID" id="278020">
    <property type="interactions" value="43"/>
</dbReference>
<dbReference type="DIP" id="DIP-61472N"/>
<dbReference type="FunCoup" id="Q12702">
    <property type="interactions" value="430"/>
</dbReference>
<dbReference type="IntAct" id="Q12702">
    <property type="interactions" value="2"/>
</dbReference>
<dbReference type="STRING" id="284812.Q12702"/>
<dbReference type="iPTMnet" id="Q12702"/>
<dbReference type="PaxDb" id="4896-SPAC227.07c.1"/>
<dbReference type="EnsemblFungi" id="SPAC227.07c.1">
    <property type="protein sequence ID" value="SPAC227.07c.1:pep"/>
    <property type="gene ID" value="SPAC227.07c"/>
</dbReference>
<dbReference type="GeneID" id="2541519"/>
<dbReference type="KEGG" id="spo:2541519"/>
<dbReference type="PomBase" id="SPAC227.07c">
    <property type="gene designation" value="pab1"/>
</dbReference>
<dbReference type="VEuPathDB" id="FungiDB:SPAC227.07c"/>
<dbReference type="eggNOG" id="KOG1354">
    <property type="taxonomic scope" value="Eukaryota"/>
</dbReference>
<dbReference type="HOGENOM" id="CLU_021713_3_3_1"/>
<dbReference type="InParanoid" id="Q12702"/>
<dbReference type="OMA" id="NQIKWCR"/>
<dbReference type="PhylomeDB" id="Q12702"/>
<dbReference type="Reactome" id="R-SPO-69273">
    <property type="pathway name" value="Cyclin A/B1/B2 associated events during G2/M transition"/>
</dbReference>
<dbReference type="Reactome" id="R-SPO-975957">
    <property type="pathway name" value="Nonsense Mediated Decay (NMD) enhanced by the Exon Junction Complex (EJC)"/>
</dbReference>
<dbReference type="PRO" id="PR:Q12702"/>
<dbReference type="Proteomes" id="UP000002485">
    <property type="component" value="Chromosome I"/>
</dbReference>
<dbReference type="GO" id="GO:0005829">
    <property type="term" value="C:cytosol"/>
    <property type="evidence" value="ECO:0007005"/>
    <property type="project" value="PomBase"/>
</dbReference>
<dbReference type="GO" id="GO:0072686">
    <property type="term" value="C:mitotic spindle"/>
    <property type="evidence" value="ECO:0000314"/>
    <property type="project" value="PomBase"/>
</dbReference>
<dbReference type="GO" id="GO:0044732">
    <property type="term" value="C:mitotic spindle pole body"/>
    <property type="evidence" value="ECO:0000314"/>
    <property type="project" value="PomBase"/>
</dbReference>
<dbReference type="GO" id="GO:0000159">
    <property type="term" value="C:protein phosphatase type 2A complex"/>
    <property type="evidence" value="ECO:0000314"/>
    <property type="project" value="PomBase"/>
</dbReference>
<dbReference type="GO" id="GO:0072542">
    <property type="term" value="F:protein phosphatase activator activity"/>
    <property type="evidence" value="ECO:0000269"/>
    <property type="project" value="PomBase"/>
</dbReference>
<dbReference type="GO" id="GO:0010972">
    <property type="term" value="P:negative regulation of G2/M transition of mitotic cell cycle"/>
    <property type="evidence" value="ECO:0000315"/>
    <property type="project" value="PomBase"/>
</dbReference>
<dbReference type="GO" id="GO:0010515">
    <property type="term" value="P:negative regulation of induction of conjugation with cellular fusion"/>
    <property type="evidence" value="ECO:0000315"/>
    <property type="project" value="PomBase"/>
</dbReference>
<dbReference type="GO" id="GO:0031030">
    <property type="term" value="P:negative regulation of septation initiation signaling"/>
    <property type="evidence" value="ECO:0000316"/>
    <property type="project" value="PomBase"/>
</dbReference>
<dbReference type="FunFam" id="2.130.10.10:FF:000189">
    <property type="entry name" value="Protein phosphatase PP2A regulatory subunit B"/>
    <property type="match status" value="1"/>
</dbReference>
<dbReference type="Gene3D" id="2.130.10.10">
    <property type="entry name" value="YVTN repeat-like/Quinoprotein amine dehydrogenase"/>
    <property type="match status" value="1"/>
</dbReference>
<dbReference type="InterPro" id="IPR000009">
    <property type="entry name" value="PP2A_PR55"/>
</dbReference>
<dbReference type="InterPro" id="IPR018067">
    <property type="entry name" value="PP2A_PR55_CS"/>
</dbReference>
<dbReference type="InterPro" id="IPR015943">
    <property type="entry name" value="WD40/YVTN_repeat-like_dom_sf"/>
</dbReference>
<dbReference type="InterPro" id="IPR036322">
    <property type="entry name" value="WD40_repeat_dom_sf"/>
</dbReference>
<dbReference type="InterPro" id="IPR001680">
    <property type="entry name" value="WD40_rpt"/>
</dbReference>
<dbReference type="PANTHER" id="PTHR11871">
    <property type="entry name" value="PROTEIN PHOSPHATASE PP2A REGULATORY SUBUNIT B"/>
    <property type="match status" value="1"/>
</dbReference>
<dbReference type="PIRSF" id="PIRSF037309">
    <property type="entry name" value="PP2A_PR55"/>
    <property type="match status" value="1"/>
</dbReference>
<dbReference type="PRINTS" id="PR00600">
    <property type="entry name" value="PP2APR55"/>
</dbReference>
<dbReference type="SMART" id="SM00320">
    <property type="entry name" value="WD40"/>
    <property type="match status" value="5"/>
</dbReference>
<dbReference type="SUPFAM" id="SSF50978">
    <property type="entry name" value="WD40 repeat-like"/>
    <property type="match status" value="1"/>
</dbReference>
<dbReference type="PROSITE" id="PS01024">
    <property type="entry name" value="PR55_1"/>
    <property type="match status" value="1"/>
</dbReference>
<dbReference type="PROSITE" id="PS01025">
    <property type="entry name" value="PR55_2"/>
    <property type="match status" value="1"/>
</dbReference>
<dbReference type="PROSITE" id="PS00678">
    <property type="entry name" value="WD_REPEATS_1"/>
    <property type="match status" value="1"/>
</dbReference>
<comment type="function">
    <text evidence="2">Phosphatase 2A affects a variety of biological processes in the cell such as transcription, cell cycle progression and cellular morphogenesis, and provides an initial identification of critical substrates for this phosphatase. The regulatory subunit may direct the catalytic subunit to distinct, albeit overlapping, subsets of substrates.</text>
</comment>
<comment type="subunit">
    <text evidence="2">PP2A exists in several trimeric forms, all of which consist of a core composed of a catalytic subunit associated with a 65 kDa (PR65) (Subunit A) and a 55 kDa (PR55) (Subunit B) regulatory subunit.</text>
</comment>
<comment type="interaction">
    <interactant intactId="EBI-16132256">
        <id>Q12702</id>
    </interactant>
    <interactant intactId="EBI-4320127">
        <id>P13681</id>
        <label>dis2</label>
    </interactant>
    <organismsDiffer>false</organismsDiffer>
    <experiments>9</experiments>
</comment>
<comment type="interaction">
    <interactant intactId="EBI-16132256">
        <id>Q12702</id>
    </interactant>
    <interactant intactId="EBI-16132377">
        <id>Q9UT08</id>
        <label>paa1</label>
    </interactant>
    <organismsDiffer>false</organismsDiffer>
    <experiments>6</experiments>
</comment>
<comment type="similarity">
    <text evidence="3">Belongs to the phosphatase 2A regulatory subunit B family.</text>
</comment>
<sequence length="463" mass="52795">MDDIEDSLDQWKFAQCFGDKGDVEDITEADIISAVEFDHTGDYLATGDKGGRVVLFERNHSKKGCEYKFFTEFQSHEPEFDYLKSLEIEEKINKIRWCKRTNRAHFLLSTNDKTIKLWKLYEKNLKVVAENNLSDSFHSPMQGPLTTPSQLRLPRLNHHDMIIAAYPRRVYANAHAYHINSISVNSDAETYISADDLRINLWNLSISDHSFNIVDIKPENMEELTEVITSAEFHPINCNHLMYSSSKGNIKLLDLRQSALCDNPCKLFEDQEDQDSKSFFSEIISSISDVKFSQNGRYILSRDYLTLKIWDVNMEKAPVKTIPLHDVLRSKLCDLYENDCIFDKFECTFSGDDKHVLSGSYSNNFGIYPTDSSLPGDRGQIVLQADKAAFRARKSAANNVPKLNAVKNNDWRSQPQAAMGSASVGLDPDNLDYNKKILHASWHPFEDSVAIAATNNLFVFSKL</sequence>
<accession>Q12702</accession>
<accession>Q9UTD2</accession>
<name>2ABA_SCHPO</name>